<protein>
    <recommendedName>
        <fullName>MICOS complex subunit Mic19</fullName>
    </recommendedName>
    <alternativeName>
        <fullName>Coiled-coil-helix-coiled-coil-helix domain-containing protein 3</fullName>
    </alternativeName>
</protein>
<accession>Q9CRB9</accession>
<comment type="function">
    <text evidence="1 4">Component of the MICOS complex, a large protein complex of the mitochondrial inner membrane that plays crucial roles in the maintenance of crista junctions, inner membrane architecture, and formation of contact sites to the outer membrane. Has also been shown to function as a transcription factor which binds to the BAG1 promoter and represses BAG1 transcription. Plays an important role in the maintenance of the MICOS complex stability and the mitochondrial cristae morphology.</text>
</comment>
<comment type="subunit">
    <text evidence="1 4">Component of the mitochondrial contact site and cristae organizing system (MICOS) complex, composed of at least MICOS10/MIC10, CHCHD3/MIC19, CHCHD6/MIC25, APOOL/MIC27, IMMT/MIC60, APOO/MIC23/MIC26 and MICOS13/MIC13. This complex was also known under the names MINOS or MitOS complex. The MICOS complex associates with mitochondrial outer membrane proteins SAMM50, MTX1 and MTX2 (together described as components of the mitochondrial outer membrane sorting assembly machinery (SAM) complex) and DNAJC11, mitochondrial inner membrane protein TMEM11 and with HSPA9. The MICOS and SAM complexes together with DNAJC11 are part of a large protein complex spanning both membranes termed the mitochondrial intermembrane space bridging (MIB) complex (By similarity). Interacts with HSPA1A/HSPA1B and OPA1, preferentially with the soluble OPA1 form.</text>
</comment>
<comment type="subcellular location">
    <subcellularLocation>
        <location evidence="4">Mitochondrion inner membrane</location>
        <topology evidence="4">Lipid-anchor</topology>
        <orientation evidence="4">Intermembrane side</orientation>
    </subcellularLocation>
    <subcellularLocation>
        <location evidence="1">Cytoplasm</location>
    </subcellularLocation>
    <subcellularLocation>
        <location evidence="1">Nucleus</location>
    </subcellularLocation>
    <subcellularLocation>
        <location evidence="1">Mitochondrion</location>
    </subcellularLocation>
</comment>
<comment type="similarity">
    <text evidence="5">Belongs to the MICOS complex subunit Mic19 family. Metazoan Mic19 subfamily.</text>
</comment>
<name>MIC19_MOUSE</name>
<dbReference type="EMBL" id="AK002263">
    <property type="protein sequence ID" value="BAB21974.1"/>
    <property type="molecule type" value="mRNA"/>
</dbReference>
<dbReference type="EMBL" id="AK003519">
    <property type="protein sequence ID" value="BAB22832.1"/>
    <property type="molecule type" value="mRNA"/>
</dbReference>
<dbReference type="EMBL" id="BC021941">
    <property type="protein sequence ID" value="AAH21941.1"/>
    <property type="molecule type" value="mRNA"/>
</dbReference>
<dbReference type="CCDS" id="CCDS19986.1"/>
<dbReference type="RefSeq" id="NP_079612.1">
    <property type="nucleotide sequence ID" value="NM_025336.2"/>
</dbReference>
<dbReference type="SMR" id="Q9CRB9"/>
<dbReference type="BioGRID" id="211197">
    <property type="interactions" value="46"/>
</dbReference>
<dbReference type="FunCoup" id="Q9CRB9">
    <property type="interactions" value="1490"/>
</dbReference>
<dbReference type="IntAct" id="Q9CRB9">
    <property type="interactions" value="13"/>
</dbReference>
<dbReference type="MINT" id="Q9CRB9"/>
<dbReference type="STRING" id="10090.ENSMUSP00000070149"/>
<dbReference type="GlyGen" id="Q9CRB9">
    <property type="glycosylation" value="1 site, 1 O-linked glycan (1 site)"/>
</dbReference>
<dbReference type="iPTMnet" id="Q9CRB9"/>
<dbReference type="PhosphoSitePlus" id="Q9CRB9"/>
<dbReference type="SwissPalm" id="Q9CRB9"/>
<dbReference type="jPOST" id="Q9CRB9"/>
<dbReference type="PaxDb" id="10090-ENSMUSP00000070149"/>
<dbReference type="PeptideAtlas" id="Q9CRB9"/>
<dbReference type="ProteomicsDB" id="252553"/>
<dbReference type="Pumba" id="Q9CRB9"/>
<dbReference type="TopDownProteomics" id="Q9CRB9"/>
<dbReference type="Antibodypedia" id="32162">
    <property type="antibodies" value="302 antibodies from 32 providers"/>
</dbReference>
<dbReference type="Ensembl" id="ENSMUST00000066379.11">
    <property type="protein sequence ID" value="ENSMUSP00000070149.5"/>
    <property type="gene ID" value="ENSMUSG00000053768.14"/>
</dbReference>
<dbReference type="GeneID" id="66075"/>
<dbReference type="KEGG" id="mmu:66075"/>
<dbReference type="UCSC" id="uc009bgo.1">
    <property type="organism name" value="mouse"/>
</dbReference>
<dbReference type="AGR" id="MGI:1913325"/>
<dbReference type="CTD" id="54927"/>
<dbReference type="MGI" id="MGI:1913325">
    <property type="gene designation" value="Chchd3"/>
</dbReference>
<dbReference type="VEuPathDB" id="HostDB:ENSMUSG00000053768"/>
<dbReference type="eggNOG" id="KOG4083">
    <property type="taxonomic scope" value="Eukaryota"/>
</dbReference>
<dbReference type="GeneTree" id="ENSGT00390000000903"/>
<dbReference type="HOGENOM" id="CLU_049040_2_1_1"/>
<dbReference type="InParanoid" id="Q9CRB9"/>
<dbReference type="OMA" id="LANQYQH"/>
<dbReference type="OrthoDB" id="9944291at2759"/>
<dbReference type="PhylomeDB" id="Q9CRB9"/>
<dbReference type="TreeFam" id="TF326279"/>
<dbReference type="BioGRID-ORCS" id="66075">
    <property type="hits" value="6 hits in 77 CRISPR screens"/>
</dbReference>
<dbReference type="CD-CODE" id="CE726F99">
    <property type="entry name" value="Postsynaptic density"/>
</dbReference>
<dbReference type="ChiTaRS" id="Chchd3">
    <property type="organism name" value="mouse"/>
</dbReference>
<dbReference type="PRO" id="PR:Q9CRB9"/>
<dbReference type="Proteomes" id="UP000000589">
    <property type="component" value="Chromosome 6"/>
</dbReference>
<dbReference type="RNAct" id="Q9CRB9">
    <property type="molecule type" value="protein"/>
</dbReference>
<dbReference type="Bgee" id="ENSMUSG00000053768">
    <property type="expression patterns" value="Expressed in cardiac muscle of left ventricle and 267 other cell types or tissues"/>
</dbReference>
<dbReference type="ExpressionAtlas" id="Q9CRB9">
    <property type="expression patterns" value="baseline and differential"/>
</dbReference>
<dbReference type="GO" id="GO:0061617">
    <property type="term" value="C:MICOS complex"/>
    <property type="evidence" value="ECO:0007669"/>
    <property type="project" value="Ensembl"/>
</dbReference>
<dbReference type="GO" id="GO:0005743">
    <property type="term" value="C:mitochondrial inner membrane"/>
    <property type="evidence" value="ECO:0000314"/>
    <property type="project" value="UniProtKB"/>
</dbReference>
<dbReference type="GO" id="GO:0005739">
    <property type="term" value="C:mitochondrion"/>
    <property type="evidence" value="ECO:0000314"/>
    <property type="project" value="UniProtKB"/>
</dbReference>
<dbReference type="GO" id="GO:0005634">
    <property type="term" value="C:nucleus"/>
    <property type="evidence" value="ECO:0007669"/>
    <property type="project" value="UniProtKB-SubCell"/>
</dbReference>
<dbReference type="GO" id="GO:0060090">
    <property type="term" value="F:molecular adaptor activity"/>
    <property type="evidence" value="ECO:0000315"/>
    <property type="project" value="UniProtKB"/>
</dbReference>
<dbReference type="GO" id="GO:0019902">
    <property type="term" value="F:phosphatase binding"/>
    <property type="evidence" value="ECO:0000250"/>
    <property type="project" value="UniProtKB"/>
</dbReference>
<dbReference type="GO" id="GO:0042407">
    <property type="term" value="P:cristae formation"/>
    <property type="evidence" value="ECO:0007669"/>
    <property type="project" value="Ensembl"/>
</dbReference>
<dbReference type="GO" id="GO:0008053">
    <property type="term" value="P:mitochondrial fusion"/>
    <property type="evidence" value="ECO:0007669"/>
    <property type="project" value="Ensembl"/>
</dbReference>
<dbReference type="InterPro" id="IPR007964">
    <property type="entry name" value="MIC19/MIC25"/>
</dbReference>
<dbReference type="InterPro" id="IPR052632">
    <property type="entry name" value="MICOS_subunit_Mic19"/>
</dbReference>
<dbReference type="PANTHER" id="PTHR21588">
    <property type="entry name" value="COILED-COIL-HELIX-COILED-COIL-HELIX DOMAIN CONTAINING 6"/>
    <property type="match status" value="1"/>
</dbReference>
<dbReference type="PANTHER" id="PTHR21588:SF18">
    <property type="entry name" value="MICOS COMPLEX SUBUNIT MIC19"/>
    <property type="match status" value="1"/>
</dbReference>
<dbReference type="Pfam" id="PF05300">
    <property type="entry name" value="MIC19_MIC25"/>
    <property type="match status" value="1"/>
</dbReference>
<dbReference type="PROSITE" id="PS51808">
    <property type="entry name" value="CHCH"/>
    <property type="match status" value="1"/>
</dbReference>
<reference key="1">
    <citation type="journal article" date="2005" name="Science">
        <title>The transcriptional landscape of the mammalian genome.</title>
        <authorList>
            <person name="Carninci P."/>
            <person name="Kasukawa T."/>
            <person name="Katayama S."/>
            <person name="Gough J."/>
            <person name="Frith M.C."/>
            <person name="Maeda N."/>
            <person name="Oyama R."/>
            <person name="Ravasi T."/>
            <person name="Lenhard B."/>
            <person name="Wells C."/>
            <person name="Kodzius R."/>
            <person name="Shimokawa K."/>
            <person name="Bajic V.B."/>
            <person name="Brenner S.E."/>
            <person name="Batalov S."/>
            <person name="Forrest A.R."/>
            <person name="Zavolan M."/>
            <person name="Davis M.J."/>
            <person name="Wilming L.G."/>
            <person name="Aidinis V."/>
            <person name="Allen J.E."/>
            <person name="Ambesi-Impiombato A."/>
            <person name="Apweiler R."/>
            <person name="Aturaliya R.N."/>
            <person name="Bailey T.L."/>
            <person name="Bansal M."/>
            <person name="Baxter L."/>
            <person name="Beisel K.W."/>
            <person name="Bersano T."/>
            <person name="Bono H."/>
            <person name="Chalk A.M."/>
            <person name="Chiu K.P."/>
            <person name="Choudhary V."/>
            <person name="Christoffels A."/>
            <person name="Clutterbuck D.R."/>
            <person name="Crowe M.L."/>
            <person name="Dalla E."/>
            <person name="Dalrymple B.P."/>
            <person name="de Bono B."/>
            <person name="Della Gatta G."/>
            <person name="di Bernardo D."/>
            <person name="Down T."/>
            <person name="Engstrom P."/>
            <person name="Fagiolini M."/>
            <person name="Faulkner G."/>
            <person name="Fletcher C.F."/>
            <person name="Fukushima T."/>
            <person name="Furuno M."/>
            <person name="Futaki S."/>
            <person name="Gariboldi M."/>
            <person name="Georgii-Hemming P."/>
            <person name="Gingeras T.R."/>
            <person name="Gojobori T."/>
            <person name="Green R.E."/>
            <person name="Gustincich S."/>
            <person name="Harbers M."/>
            <person name="Hayashi Y."/>
            <person name="Hensch T.K."/>
            <person name="Hirokawa N."/>
            <person name="Hill D."/>
            <person name="Huminiecki L."/>
            <person name="Iacono M."/>
            <person name="Ikeo K."/>
            <person name="Iwama A."/>
            <person name="Ishikawa T."/>
            <person name="Jakt M."/>
            <person name="Kanapin A."/>
            <person name="Katoh M."/>
            <person name="Kawasawa Y."/>
            <person name="Kelso J."/>
            <person name="Kitamura H."/>
            <person name="Kitano H."/>
            <person name="Kollias G."/>
            <person name="Krishnan S.P."/>
            <person name="Kruger A."/>
            <person name="Kummerfeld S.K."/>
            <person name="Kurochkin I.V."/>
            <person name="Lareau L.F."/>
            <person name="Lazarevic D."/>
            <person name="Lipovich L."/>
            <person name="Liu J."/>
            <person name="Liuni S."/>
            <person name="McWilliam S."/>
            <person name="Madan Babu M."/>
            <person name="Madera M."/>
            <person name="Marchionni L."/>
            <person name="Matsuda H."/>
            <person name="Matsuzawa S."/>
            <person name="Miki H."/>
            <person name="Mignone F."/>
            <person name="Miyake S."/>
            <person name="Morris K."/>
            <person name="Mottagui-Tabar S."/>
            <person name="Mulder N."/>
            <person name="Nakano N."/>
            <person name="Nakauchi H."/>
            <person name="Ng P."/>
            <person name="Nilsson R."/>
            <person name="Nishiguchi S."/>
            <person name="Nishikawa S."/>
            <person name="Nori F."/>
            <person name="Ohara O."/>
            <person name="Okazaki Y."/>
            <person name="Orlando V."/>
            <person name="Pang K.C."/>
            <person name="Pavan W.J."/>
            <person name="Pavesi G."/>
            <person name="Pesole G."/>
            <person name="Petrovsky N."/>
            <person name="Piazza S."/>
            <person name="Reed J."/>
            <person name="Reid J.F."/>
            <person name="Ring B.Z."/>
            <person name="Ringwald M."/>
            <person name="Rost B."/>
            <person name="Ruan Y."/>
            <person name="Salzberg S.L."/>
            <person name="Sandelin A."/>
            <person name="Schneider C."/>
            <person name="Schoenbach C."/>
            <person name="Sekiguchi K."/>
            <person name="Semple C.A."/>
            <person name="Seno S."/>
            <person name="Sessa L."/>
            <person name="Sheng Y."/>
            <person name="Shibata Y."/>
            <person name="Shimada H."/>
            <person name="Shimada K."/>
            <person name="Silva D."/>
            <person name="Sinclair B."/>
            <person name="Sperling S."/>
            <person name="Stupka E."/>
            <person name="Sugiura K."/>
            <person name="Sultana R."/>
            <person name="Takenaka Y."/>
            <person name="Taki K."/>
            <person name="Tammoja K."/>
            <person name="Tan S.L."/>
            <person name="Tang S."/>
            <person name="Taylor M.S."/>
            <person name="Tegner J."/>
            <person name="Teichmann S.A."/>
            <person name="Ueda H.R."/>
            <person name="van Nimwegen E."/>
            <person name="Verardo R."/>
            <person name="Wei C.L."/>
            <person name="Yagi K."/>
            <person name="Yamanishi H."/>
            <person name="Zabarovsky E."/>
            <person name="Zhu S."/>
            <person name="Zimmer A."/>
            <person name="Hide W."/>
            <person name="Bult C."/>
            <person name="Grimmond S.M."/>
            <person name="Teasdale R.D."/>
            <person name="Liu E.T."/>
            <person name="Brusic V."/>
            <person name="Quackenbush J."/>
            <person name="Wahlestedt C."/>
            <person name="Mattick J.S."/>
            <person name="Hume D.A."/>
            <person name="Kai C."/>
            <person name="Sasaki D."/>
            <person name="Tomaru Y."/>
            <person name="Fukuda S."/>
            <person name="Kanamori-Katayama M."/>
            <person name="Suzuki M."/>
            <person name="Aoki J."/>
            <person name="Arakawa T."/>
            <person name="Iida J."/>
            <person name="Imamura K."/>
            <person name="Itoh M."/>
            <person name="Kato T."/>
            <person name="Kawaji H."/>
            <person name="Kawagashira N."/>
            <person name="Kawashima T."/>
            <person name="Kojima M."/>
            <person name="Kondo S."/>
            <person name="Konno H."/>
            <person name="Nakano K."/>
            <person name="Ninomiya N."/>
            <person name="Nishio T."/>
            <person name="Okada M."/>
            <person name="Plessy C."/>
            <person name="Shibata K."/>
            <person name="Shiraki T."/>
            <person name="Suzuki S."/>
            <person name="Tagami M."/>
            <person name="Waki K."/>
            <person name="Watahiki A."/>
            <person name="Okamura-Oho Y."/>
            <person name="Suzuki H."/>
            <person name="Kawai J."/>
            <person name="Hayashizaki Y."/>
        </authorList>
    </citation>
    <scope>NUCLEOTIDE SEQUENCE [LARGE SCALE MRNA]</scope>
    <source>
        <strain>C57BL/6J</strain>
        <tissue>Kidney</tissue>
    </source>
</reference>
<reference key="2">
    <citation type="journal article" date="2004" name="Genome Res.">
        <title>The status, quality, and expansion of the NIH full-length cDNA project: the Mammalian Gene Collection (MGC).</title>
        <authorList>
            <consortium name="The MGC Project Team"/>
        </authorList>
    </citation>
    <scope>NUCLEOTIDE SEQUENCE [LARGE SCALE MRNA]</scope>
    <source>
        <strain>FVB/N</strain>
        <tissue>Liver</tissue>
    </source>
</reference>
<reference key="3">
    <citation type="journal article" date="2011" name="J. Biol. Chem.">
        <title>ChChd3, an inner mitochondrial membrane protein, is essential for maintaining crista integrity and mitochondrial function.</title>
        <authorList>
            <person name="Darshi M."/>
            <person name="Mendiola V.L."/>
            <person name="Mackey M.R."/>
            <person name="Murphy A.N."/>
            <person name="Koller A."/>
            <person name="Perkins G.A."/>
            <person name="Ellisman M.H."/>
            <person name="Taylor S.S."/>
        </authorList>
    </citation>
    <scope>PROTEIN SEQUENCE OF 2-8</scope>
    <scope>FUNCTION</scope>
    <scope>CLEAVAGE OF INITIATOR METHIONINE</scope>
    <scope>MYRISTOYLATION AT GLY-2</scope>
    <scope>INTERACTION WITH HSPA1A/HSPA1B; IMMT; OPA1 AND SAMM50</scope>
    <scope>SUBCELLULAR LOCATION</scope>
    <scope>MUTAGENESIS OF GLY-2</scope>
    <scope>IDENTIFICATION BY MASS SPECTROMETRY</scope>
</reference>
<reference key="4">
    <citation type="journal article" date="2007" name="Proc. Natl. Acad. Sci. U.S.A.">
        <title>Large-scale phosphorylation analysis of mouse liver.</title>
        <authorList>
            <person name="Villen J."/>
            <person name="Beausoleil S.A."/>
            <person name="Gerber S.A."/>
            <person name="Gygi S.P."/>
        </authorList>
    </citation>
    <scope>IDENTIFICATION BY MASS SPECTROMETRY [LARGE SCALE ANALYSIS]</scope>
    <source>
        <tissue>Liver</tissue>
    </source>
</reference>
<reference key="5">
    <citation type="journal article" date="2010" name="Cell">
        <title>A tissue-specific atlas of mouse protein phosphorylation and expression.</title>
        <authorList>
            <person name="Huttlin E.L."/>
            <person name="Jedrychowski M.P."/>
            <person name="Elias J.E."/>
            <person name="Goswami T."/>
            <person name="Rad R."/>
            <person name="Beausoleil S.A."/>
            <person name="Villen J."/>
            <person name="Haas W."/>
            <person name="Sowa M.E."/>
            <person name="Gygi S.P."/>
        </authorList>
    </citation>
    <scope>PHOSPHORYLATION [LARGE SCALE ANALYSIS] AT SER-29; SER-50; SER-51 AND SER-56</scope>
    <scope>IDENTIFICATION BY MASS SPECTROMETRY [LARGE SCALE ANALYSIS]</scope>
    <source>
        <tissue>Brain</tissue>
        <tissue>Brown adipose tissue</tissue>
        <tissue>Heart</tissue>
        <tissue>Kidney</tissue>
        <tissue>Liver</tissue>
        <tissue>Lung</tissue>
        <tissue>Pancreas</tissue>
        <tissue>Spleen</tissue>
        <tissue>Testis</tissue>
    </source>
</reference>
<keyword id="KW-0007">Acetylation</keyword>
<keyword id="KW-0963">Cytoplasm</keyword>
<keyword id="KW-0903">Direct protein sequencing</keyword>
<keyword id="KW-1015">Disulfide bond</keyword>
<keyword id="KW-0449">Lipoprotein</keyword>
<keyword id="KW-0472">Membrane</keyword>
<keyword id="KW-0496">Mitochondrion</keyword>
<keyword id="KW-0999">Mitochondrion inner membrane</keyword>
<keyword id="KW-0519">Myristate</keyword>
<keyword id="KW-0539">Nucleus</keyword>
<keyword id="KW-0597">Phosphoprotein</keyword>
<keyword id="KW-1185">Reference proteome</keyword>
<keyword id="KW-0678">Repressor</keyword>
<keyword id="KW-0804">Transcription</keyword>
<keyword id="KW-0805">Transcription regulation</keyword>
<evidence type="ECO:0000250" key="1">
    <source>
        <dbReference type="UniProtKB" id="Q9NX63"/>
    </source>
</evidence>
<evidence type="ECO:0000255" key="2">
    <source>
        <dbReference type="PROSITE-ProRule" id="PRU01150"/>
    </source>
</evidence>
<evidence type="ECO:0000256" key="3">
    <source>
        <dbReference type="SAM" id="MobiDB-lite"/>
    </source>
</evidence>
<evidence type="ECO:0000269" key="4">
    <source>
    </source>
</evidence>
<evidence type="ECO:0000305" key="5"/>
<evidence type="ECO:0007744" key="6">
    <source>
    </source>
</evidence>
<feature type="initiator methionine" description="Removed" evidence="4">
    <location>
        <position position="1"/>
    </location>
</feature>
<feature type="chain" id="PRO_0000129164" description="MICOS complex subunit Mic19">
    <location>
        <begin position="2"/>
        <end position="227"/>
    </location>
</feature>
<feature type="domain" description="CHCH" evidence="2">
    <location>
        <begin position="180"/>
        <end position="222"/>
    </location>
</feature>
<feature type="region of interest" description="Disordered" evidence="3">
    <location>
        <begin position="32"/>
        <end position="57"/>
    </location>
</feature>
<feature type="region of interest" description="Disordered" evidence="3">
    <location>
        <begin position="73"/>
        <end position="92"/>
    </location>
</feature>
<feature type="short sequence motif" description="Cx9C motif 1" evidence="2">
    <location>
        <begin position="183"/>
        <end position="193"/>
    </location>
</feature>
<feature type="short sequence motif" description="Cx9C motif 2" evidence="2">
    <location>
        <begin position="204"/>
        <end position="214"/>
    </location>
</feature>
<feature type="compositionally biased region" description="Polar residues" evidence="3">
    <location>
        <begin position="39"/>
        <end position="50"/>
    </location>
</feature>
<feature type="modified residue" description="Phosphoserine" evidence="6">
    <location>
        <position position="29"/>
    </location>
</feature>
<feature type="modified residue" description="Phosphotyrosine" evidence="1">
    <location>
        <position position="49"/>
    </location>
</feature>
<feature type="modified residue" description="Phosphoserine" evidence="6">
    <location>
        <position position="50"/>
    </location>
</feature>
<feature type="modified residue" description="Phosphoserine" evidence="6">
    <location>
        <position position="51"/>
    </location>
</feature>
<feature type="modified residue" description="Phosphoserine" evidence="6">
    <location>
        <position position="56"/>
    </location>
</feature>
<feature type="modified residue" description="Phosphoserine" evidence="1">
    <location>
        <position position="58"/>
    </location>
</feature>
<feature type="modified residue" description="N6-acetyllysine" evidence="1">
    <location>
        <position position="142"/>
    </location>
</feature>
<feature type="lipid moiety-binding region" description="N-myristoyl glycine" evidence="4">
    <location>
        <position position="2"/>
    </location>
</feature>
<feature type="disulfide bond" evidence="2">
    <location>
        <begin position="183"/>
        <end position="214"/>
    </location>
</feature>
<feature type="disulfide bond" evidence="2">
    <location>
        <begin position="193"/>
        <end position="204"/>
    </location>
</feature>
<feature type="mutagenesis site" description="Loss of SAMM50-binding. Reduced affinity toward OPA1. No effect on IMMT-binding." evidence="4">
    <original>G</original>
    <variation>A</variation>
    <location>
        <position position="2"/>
    </location>
</feature>
<sequence length="227" mass="26335">MGGTASTRRVTFEADENENITVVKGIRLSENVIDRMKESSPSGSKSQRYSSVYGASVSDEDLKRRVAEELALEQAKKESEHQRRLKQARDLERERAAANEQLTRAVLRERISSEEERMKAKHLARQLEEKDRVMRKQDAFYKEQLARLEERSSEFYKVTTEEYQKAAEEVEAKFKRYEYHPVCADLQTKILQCYRQNTQQTLSCSALASQYMHCVNHAKQSMLEKGG</sequence>
<organism>
    <name type="scientific">Mus musculus</name>
    <name type="common">Mouse</name>
    <dbReference type="NCBI Taxonomy" id="10090"/>
    <lineage>
        <taxon>Eukaryota</taxon>
        <taxon>Metazoa</taxon>
        <taxon>Chordata</taxon>
        <taxon>Craniata</taxon>
        <taxon>Vertebrata</taxon>
        <taxon>Euteleostomi</taxon>
        <taxon>Mammalia</taxon>
        <taxon>Eutheria</taxon>
        <taxon>Euarchontoglires</taxon>
        <taxon>Glires</taxon>
        <taxon>Rodentia</taxon>
        <taxon>Myomorpha</taxon>
        <taxon>Muroidea</taxon>
        <taxon>Muridae</taxon>
        <taxon>Murinae</taxon>
        <taxon>Mus</taxon>
        <taxon>Mus</taxon>
    </lineage>
</organism>
<gene>
    <name type="primary">Chchd3</name>
    <name type="synonym">Mic19</name>
</gene>
<proteinExistence type="evidence at protein level"/>